<name>CDD_AERS4</name>
<reference key="1">
    <citation type="journal article" date="2008" name="BMC Genomics">
        <title>The genome of Aeromonas salmonicida subsp. salmonicida A449: insights into the evolution of a fish pathogen.</title>
        <authorList>
            <person name="Reith M.E."/>
            <person name="Singh R.K."/>
            <person name="Curtis B."/>
            <person name="Boyd J.M."/>
            <person name="Bouevitch A."/>
            <person name="Kimball J."/>
            <person name="Munholland J."/>
            <person name="Murphy C."/>
            <person name="Sarty D."/>
            <person name="Williams J."/>
            <person name="Nash J.H."/>
            <person name="Johnson S.C."/>
            <person name="Brown L.L."/>
        </authorList>
    </citation>
    <scope>NUCLEOTIDE SEQUENCE [LARGE SCALE GENOMIC DNA]</scope>
    <source>
        <strain>A449</strain>
    </source>
</reference>
<gene>
    <name evidence="1" type="primary">cdd</name>
    <name type="ordered locus">ASA_2410</name>
</gene>
<sequence>MHPRFAKPLDTLSAPLKAALLPMLDNDFQARFTPQQVATLKAATGLEDRALRLALLPLAAACSVAPISKFFVGAIACGLSGTWYFGANMEFAGQGLFHSVHAEQSAISNAWLGGETGISEITVNYTPCGHCRQFMNELSTAKTLQVSLPDDLSALQSFLPHSFGPADLDITDALMSPQAHDELVLESEDPIWRAALAAARQSYAPYSQGYAAVALLFADGRLFCGRYAENAAFNPSLPPMQMACAHAVLCGEDLASIRRAVLLESKNGQISQRDSAQSTLKALGSVELEYQAV</sequence>
<comment type="function">
    <text evidence="1">This enzyme scavenges exogenous and endogenous cytidine and 2'-deoxycytidine for UMP synthesis.</text>
</comment>
<comment type="catalytic activity">
    <reaction evidence="1">
        <text>cytidine + H2O + H(+) = uridine + NH4(+)</text>
        <dbReference type="Rhea" id="RHEA:16069"/>
        <dbReference type="ChEBI" id="CHEBI:15377"/>
        <dbReference type="ChEBI" id="CHEBI:15378"/>
        <dbReference type="ChEBI" id="CHEBI:16704"/>
        <dbReference type="ChEBI" id="CHEBI:17562"/>
        <dbReference type="ChEBI" id="CHEBI:28938"/>
        <dbReference type="EC" id="3.5.4.5"/>
    </reaction>
</comment>
<comment type="catalytic activity">
    <reaction evidence="1">
        <text>2'-deoxycytidine + H2O + H(+) = 2'-deoxyuridine + NH4(+)</text>
        <dbReference type="Rhea" id="RHEA:13433"/>
        <dbReference type="ChEBI" id="CHEBI:15377"/>
        <dbReference type="ChEBI" id="CHEBI:15378"/>
        <dbReference type="ChEBI" id="CHEBI:15698"/>
        <dbReference type="ChEBI" id="CHEBI:16450"/>
        <dbReference type="ChEBI" id="CHEBI:28938"/>
        <dbReference type="EC" id="3.5.4.5"/>
    </reaction>
</comment>
<comment type="cofactor">
    <cofactor evidence="1">
        <name>Zn(2+)</name>
        <dbReference type="ChEBI" id="CHEBI:29105"/>
    </cofactor>
    <text evidence="1">Binds 1 zinc ion.</text>
</comment>
<comment type="subunit">
    <text evidence="1">Homodimer.</text>
</comment>
<comment type="similarity">
    <text evidence="1">Belongs to the cytidine and deoxycytidylate deaminase family.</text>
</comment>
<accession>A4SNI2</accession>
<evidence type="ECO:0000255" key="1">
    <source>
        <dbReference type="HAMAP-Rule" id="MF_01558"/>
    </source>
</evidence>
<evidence type="ECO:0000255" key="2">
    <source>
        <dbReference type="PROSITE-ProRule" id="PRU01083"/>
    </source>
</evidence>
<dbReference type="EC" id="3.5.4.5" evidence="1"/>
<dbReference type="EMBL" id="CP000644">
    <property type="protein sequence ID" value="ABO90454.1"/>
    <property type="molecule type" value="Genomic_DNA"/>
</dbReference>
<dbReference type="RefSeq" id="WP_005310793.1">
    <property type="nucleotide sequence ID" value="NC_009348.1"/>
</dbReference>
<dbReference type="SMR" id="A4SNI2"/>
<dbReference type="STRING" id="29491.GCA_000820065_01517"/>
<dbReference type="KEGG" id="asa:ASA_2410"/>
<dbReference type="eggNOG" id="COG0295">
    <property type="taxonomic scope" value="Bacteria"/>
</dbReference>
<dbReference type="HOGENOM" id="CLU_052424_0_0_6"/>
<dbReference type="Proteomes" id="UP000000225">
    <property type="component" value="Chromosome"/>
</dbReference>
<dbReference type="GO" id="GO:0005829">
    <property type="term" value="C:cytosol"/>
    <property type="evidence" value="ECO:0007669"/>
    <property type="project" value="TreeGrafter"/>
</dbReference>
<dbReference type="GO" id="GO:0004126">
    <property type="term" value="F:cytidine deaminase activity"/>
    <property type="evidence" value="ECO:0007669"/>
    <property type="project" value="UniProtKB-UniRule"/>
</dbReference>
<dbReference type="GO" id="GO:0042802">
    <property type="term" value="F:identical protein binding"/>
    <property type="evidence" value="ECO:0007669"/>
    <property type="project" value="UniProtKB-ARBA"/>
</dbReference>
<dbReference type="GO" id="GO:0008270">
    <property type="term" value="F:zinc ion binding"/>
    <property type="evidence" value="ECO:0007669"/>
    <property type="project" value="UniProtKB-UniRule"/>
</dbReference>
<dbReference type="GO" id="GO:0009972">
    <property type="term" value="P:cytidine deamination"/>
    <property type="evidence" value="ECO:0007669"/>
    <property type="project" value="InterPro"/>
</dbReference>
<dbReference type="CDD" id="cd01283">
    <property type="entry name" value="cytidine_deaminase"/>
    <property type="match status" value="2"/>
</dbReference>
<dbReference type="FunFam" id="3.40.140.10:FF:000007">
    <property type="entry name" value="Cytidine deaminase"/>
    <property type="match status" value="1"/>
</dbReference>
<dbReference type="Gene3D" id="3.40.140.10">
    <property type="entry name" value="Cytidine Deaminase, domain 2"/>
    <property type="match status" value="2"/>
</dbReference>
<dbReference type="HAMAP" id="MF_01558">
    <property type="entry name" value="Cyt_deam"/>
    <property type="match status" value="1"/>
</dbReference>
<dbReference type="InterPro" id="IPR016192">
    <property type="entry name" value="APOBEC/CMP_deaminase_Zn-bd"/>
</dbReference>
<dbReference type="InterPro" id="IPR002125">
    <property type="entry name" value="CMP_dCMP_dom"/>
</dbReference>
<dbReference type="InterPro" id="IPR013171">
    <property type="entry name" value="Cyd/dCyd_deaminase_Zn-bd"/>
</dbReference>
<dbReference type="InterPro" id="IPR050202">
    <property type="entry name" value="Cyt/Deoxycyt_deaminase"/>
</dbReference>
<dbReference type="InterPro" id="IPR016193">
    <property type="entry name" value="Cytidine_deaminase-like"/>
</dbReference>
<dbReference type="InterPro" id="IPR020797">
    <property type="entry name" value="Cytidine_deaminase_bacteria"/>
</dbReference>
<dbReference type="NCBIfam" id="NF006537">
    <property type="entry name" value="PRK09027.1"/>
    <property type="match status" value="1"/>
</dbReference>
<dbReference type="PANTHER" id="PTHR11644">
    <property type="entry name" value="CYTIDINE DEAMINASE"/>
    <property type="match status" value="1"/>
</dbReference>
<dbReference type="PANTHER" id="PTHR11644:SF2">
    <property type="entry name" value="CYTIDINE DEAMINASE"/>
    <property type="match status" value="1"/>
</dbReference>
<dbReference type="Pfam" id="PF00383">
    <property type="entry name" value="dCMP_cyt_deam_1"/>
    <property type="match status" value="1"/>
</dbReference>
<dbReference type="Pfam" id="PF08211">
    <property type="entry name" value="dCMP_cyt_deam_2"/>
    <property type="match status" value="1"/>
</dbReference>
<dbReference type="PIRSF" id="PIRSF006334">
    <property type="entry name" value="Cdd_plus_pseudo"/>
    <property type="match status" value="1"/>
</dbReference>
<dbReference type="SUPFAM" id="SSF53927">
    <property type="entry name" value="Cytidine deaminase-like"/>
    <property type="match status" value="2"/>
</dbReference>
<dbReference type="PROSITE" id="PS00903">
    <property type="entry name" value="CYT_DCMP_DEAMINASES_1"/>
    <property type="match status" value="1"/>
</dbReference>
<dbReference type="PROSITE" id="PS51747">
    <property type="entry name" value="CYT_DCMP_DEAMINASES_2"/>
    <property type="match status" value="2"/>
</dbReference>
<feature type="chain" id="PRO_1000068946" description="Cytidine deaminase">
    <location>
        <begin position="1"/>
        <end position="293"/>
    </location>
</feature>
<feature type="domain" description="CMP/dCMP-type deaminase 1" evidence="2">
    <location>
        <begin position="47"/>
        <end position="166"/>
    </location>
</feature>
<feature type="domain" description="CMP/dCMP-type deaminase 2" evidence="2">
    <location>
        <begin position="186"/>
        <end position="293"/>
    </location>
</feature>
<feature type="active site" description="Proton donor" evidence="1">
    <location>
        <position position="103"/>
    </location>
</feature>
<feature type="binding site" evidence="1">
    <location>
        <begin position="88"/>
        <end position="90"/>
    </location>
    <ligand>
        <name>substrate</name>
    </ligand>
</feature>
<feature type="binding site" evidence="1">
    <location>
        <position position="101"/>
    </location>
    <ligand>
        <name>Zn(2+)</name>
        <dbReference type="ChEBI" id="CHEBI:29105"/>
        <note>catalytic</note>
    </ligand>
</feature>
<feature type="binding site" evidence="1">
    <location>
        <position position="128"/>
    </location>
    <ligand>
        <name>Zn(2+)</name>
        <dbReference type="ChEBI" id="CHEBI:29105"/>
        <note>catalytic</note>
    </ligand>
</feature>
<feature type="binding site" evidence="1">
    <location>
        <position position="131"/>
    </location>
    <ligand>
        <name>Zn(2+)</name>
        <dbReference type="ChEBI" id="CHEBI:29105"/>
        <note>catalytic</note>
    </ligand>
</feature>
<keyword id="KW-0378">Hydrolase</keyword>
<keyword id="KW-0479">Metal-binding</keyword>
<keyword id="KW-0862">Zinc</keyword>
<organism>
    <name type="scientific">Aeromonas salmonicida (strain A449)</name>
    <dbReference type="NCBI Taxonomy" id="382245"/>
    <lineage>
        <taxon>Bacteria</taxon>
        <taxon>Pseudomonadati</taxon>
        <taxon>Pseudomonadota</taxon>
        <taxon>Gammaproteobacteria</taxon>
        <taxon>Aeromonadales</taxon>
        <taxon>Aeromonadaceae</taxon>
        <taxon>Aeromonas</taxon>
    </lineage>
</organism>
<proteinExistence type="inferred from homology"/>
<protein>
    <recommendedName>
        <fullName evidence="1">Cytidine deaminase</fullName>
        <ecNumber evidence="1">3.5.4.5</ecNumber>
    </recommendedName>
    <alternativeName>
        <fullName evidence="1">Cytidine aminohydrolase</fullName>
        <shortName evidence="1">CDA</shortName>
    </alternativeName>
</protein>